<dbReference type="EMBL" id="AAFI02000194">
    <property type="protein sequence ID" value="EAL61107.1"/>
    <property type="molecule type" value="Genomic_DNA"/>
</dbReference>
<dbReference type="RefSeq" id="XP_629520.1">
    <property type="nucleotide sequence ID" value="XM_629518.1"/>
</dbReference>
<dbReference type="SMR" id="Q54D00"/>
<dbReference type="FunCoup" id="Q54D00">
    <property type="interactions" value="22"/>
</dbReference>
<dbReference type="STRING" id="44689.Q54D00"/>
<dbReference type="PaxDb" id="44689-DDB0266848"/>
<dbReference type="EnsemblProtists" id="EAL61107">
    <property type="protein sequence ID" value="EAL61107"/>
    <property type="gene ID" value="DDB_G0292608"/>
</dbReference>
<dbReference type="GeneID" id="8628772"/>
<dbReference type="KEGG" id="ddi:DDB_G0292608"/>
<dbReference type="dictyBase" id="DDB_G0292608">
    <property type="gene designation" value="med4"/>
</dbReference>
<dbReference type="VEuPathDB" id="AmoebaDB:DDB_G0292608"/>
<dbReference type="eggNOG" id="ENOG502RE10">
    <property type="taxonomic scope" value="Eukaryota"/>
</dbReference>
<dbReference type="HOGENOM" id="CLU_809943_0_0_1"/>
<dbReference type="InParanoid" id="Q54D00"/>
<dbReference type="OMA" id="YAHKISG"/>
<dbReference type="PRO" id="PR:Q54D00"/>
<dbReference type="Proteomes" id="UP000002195">
    <property type="component" value="Chromosome 6"/>
</dbReference>
<dbReference type="GO" id="GO:0070847">
    <property type="term" value="C:core mediator complex"/>
    <property type="evidence" value="ECO:0000318"/>
    <property type="project" value="GO_Central"/>
</dbReference>
<dbReference type="GO" id="GO:0016592">
    <property type="term" value="C:mediator complex"/>
    <property type="evidence" value="ECO:0000250"/>
    <property type="project" value="dictyBase"/>
</dbReference>
<dbReference type="GO" id="GO:0003712">
    <property type="term" value="F:transcription coregulator activity"/>
    <property type="evidence" value="ECO:0000318"/>
    <property type="project" value="GO_Central"/>
</dbReference>
<dbReference type="GO" id="GO:0006357">
    <property type="term" value="P:regulation of transcription by RNA polymerase II"/>
    <property type="evidence" value="ECO:0000318"/>
    <property type="project" value="GO_Central"/>
</dbReference>
<dbReference type="InterPro" id="IPR019258">
    <property type="entry name" value="Mediator_Med4"/>
</dbReference>
<dbReference type="PANTHER" id="PTHR13208">
    <property type="entry name" value="MEDIATOR OF RNA POLYMERASE II TRANSCRIPTION SUBUNIT 4"/>
    <property type="match status" value="1"/>
</dbReference>
<dbReference type="PANTHER" id="PTHR13208:SF2">
    <property type="entry name" value="MEDIATOR OF RNA POLYMERASE II TRANSCRIPTION SUBUNIT 4"/>
    <property type="match status" value="1"/>
</dbReference>
<dbReference type="Pfam" id="PF10018">
    <property type="entry name" value="Med4"/>
    <property type="match status" value="1"/>
</dbReference>
<evidence type="ECO:0000250" key="1"/>
<evidence type="ECO:0000255" key="2"/>
<evidence type="ECO:0000256" key="3">
    <source>
        <dbReference type="SAM" id="MobiDB-lite"/>
    </source>
</evidence>
<evidence type="ECO:0000305" key="4"/>
<organism>
    <name type="scientific">Dictyostelium discoideum</name>
    <name type="common">Social amoeba</name>
    <dbReference type="NCBI Taxonomy" id="44689"/>
    <lineage>
        <taxon>Eukaryota</taxon>
        <taxon>Amoebozoa</taxon>
        <taxon>Evosea</taxon>
        <taxon>Eumycetozoa</taxon>
        <taxon>Dictyostelia</taxon>
        <taxon>Dictyosteliales</taxon>
        <taxon>Dictyosteliaceae</taxon>
        <taxon>Dictyostelium</taxon>
    </lineage>
</organism>
<keyword id="KW-0010">Activator</keyword>
<keyword id="KW-0175">Coiled coil</keyword>
<keyword id="KW-0539">Nucleus</keyword>
<keyword id="KW-1185">Reference proteome</keyword>
<keyword id="KW-0804">Transcription</keyword>
<keyword id="KW-0805">Transcription regulation</keyword>
<accession>Q54D00</accession>
<sequence>MNKRINEVSGRPIGEYLSRDISDFQRVSRTLFECFSSLATGATLNSQQLQQIQLPIDQISNNATPNMVLQLMNHLIDVDKIYQNTLKKLEKHQKIQKEITEIQKEIEEKDKLISTLALNLKDIESFLENELSQDNVNINNGNASDGIVNEVLIDLKQPDDAASMDNIVNREVSPEDLISYAHKISGTTSAPFGYQPNAPLASLFKPPAPQDEMMRSSVLFTKPPPHVLKYYGLAEIDVTTPTMAANISSPFSIGGNVGDVTTPTSKEQEDQQQQQQQQQPQQQLSQSQQSQQQTESELQPIQSILQPPQQLNIDLDLNPDLDSSGDDDDEDDDDEESEEVEWD</sequence>
<comment type="function">
    <text evidence="1">Component of the Mediator complex, a coactivator involved in the regulated transcription of nearly all RNA polymerase II-dependent genes. Mediator functions as a bridge to convey information from gene-specific regulatory proteins to the basal RNA polymerase II transcription machinery. Mediator is recruited to promoters by direct interactions with regulatory proteins and serves as a scaffold for the assembly of a functional preinitiation complex with RNA polymerase II and the general transcription factors (By similarity).</text>
</comment>
<comment type="subunit">
    <text evidence="1">Component of the Mediator complex.</text>
</comment>
<comment type="subcellular location">
    <subcellularLocation>
        <location evidence="1">Nucleus</location>
    </subcellularLocation>
</comment>
<comment type="similarity">
    <text evidence="4">Belongs to the Mediator complex subunit 4 family.</text>
</comment>
<reference key="1">
    <citation type="journal article" date="2005" name="Nature">
        <title>The genome of the social amoeba Dictyostelium discoideum.</title>
        <authorList>
            <person name="Eichinger L."/>
            <person name="Pachebat J.A."/>
            <person name="Gloeckner G."/>
            <person name="Rajandream M.A."/>
            <person name="Sucgang R."/>
            <person name="Berriman M."/>
            <person name="Song J."/>
            <person name="Olsen R."/>
            <person name="Szafranski K."/>
            <person name="Xu Q."/>
            <person name="Tunggal B."/>
            <person name="Kummerfeld S."/>
            <person name="Madera M."/>
            <person name="Konfortov B.A."/>
            <person name="Rivero F."/>
            <person name="Bankier A.T."/>
            <person name="Lehmann R."/>
            <person name="Hamlin N."/>
            <person name="Davies R."/>
            <person name="Gaudet P."/>
            <person name="Fey P."/>
            <person name="Pilcher K."/>
            <person name="Chen G."/>
            <person name="Saunders D."/>
            <person name="Sodergren E.J."/>
            <person name="Davis P."/>
            <person name="Kerhornou A."/>
            <person name="Nie X."/>
            <person name="Hall N."/>
            <person name="Anjard C."/>
            <person name="Hemphill L."/>
            <person name="Bason N."/>
            <person name="Farbrother P."/>
            <person name="Desany B."/>
            <person name="Just E."/>
            <person name="Morio T."/>
            <person name="Rost R."/>
            <person name="Churcher C.M."/>
            <person name="Cooper J."/>
            <person name="Haydock S."/>
            <person name="van Driessche N."/>
            <person name="Cronin A."/>
            <person name="Goodhead I."/>
            <person name="Muzny D.M."/>
            <person name="Mourier T."/>
            <person name="Pain A."/>
            <person name="Lu M."/>
            <person name="Harper D."/>
            <person name="Lindsay R."/>
            <person name="Hauser H."/>
            <person name="James K.D."/>
            <person name="Quiles M."/>
            <person name="Madan Babu M."/>
            <person name="Saito T."/>
            <person name="Buchrieser C."/>
            <person name="Wardroper A."/>
            <person name="Felder M."/>
            <person name="Thangavelu M."/>
            <person name="Johnson D."/>
            <person name="Knights A."/>
            <person name="Loulseged H."/>
            <person name="Mungall K.L."/>
            <person name="Oliver K."/>
            <person name="Price C."/>
            <person name="Quail M.A."/>
            <person name="Urushihara H."/>
            <person name="Hernandez J."/>
            <person name="Rabbinowitsch E."/>
            <person name="Steffen D."/>
            <person name="Sanders M."/>
            <person name="Ma J."/>
            <person name="Kohara Y."/>
            <person name="Sharp S."/>
            <person name="Simmonds M.N."/>
            <person name="Spiegler S."/>
            <person name="Tivey A."/>
            <person name="Sugano S."/>
            <person name="White B."/>
            <person name="Walker D."/>
            <person name="Woodward J.R."/>
            <person name="Winckler T."/>
            <person name="Tanaka Y."/>
            <person name="Shaulsky G."/>
            <person name="Schleicher M."/>
            <person name="Weinstock G.M."/>
            <person name="Rosenthal A."/>
            <person name="Cox E.C."/>
            <person name="Chisholm R.L."/>
            <person name="Gibbs R.A."/>
            <person name="Loomis W.F."/>
            <person name="Platzer M."/>
            <person name="Kay R.R."/>
            <person name="Williams J.G."/>
            <person name="Dear P.H."/>
            <person name="Noegel A.A."/>
            <person name="Barrell B.G."/>
            <person name="Kuspa A."/>
        </authorList>
    </citation>
    <scope>NUCLEOTIDE SEQUENCE [LARGE SCALE GENOMIC DNA]</scope>
    <source>
        <strain>AX4</strain>
    </source>
</reference>
<reference key="2">
    <citation type="journal article" date="2008" name="Nucleic Acids Res.">
        <title>Comparative genomics supports a deep evolutionary origin for the large, four-module transcriptional mediator complex.</title>
        <authorList>
            <person name="Bourbon H.-M."/>
        </authorList>
    </citation>
    <scope>NOMENCLATURE</scope>
</reference>
<feature type="chain" id="PRO_0000388644" description="Putative mediator of RNA polymerase II transcription subunit 4">
    <location>
        <begin position="1"/>
        <end position="343"/>
    </location>
</feature>
<feature type="region of interest" description="Disordered" evidence="3">
    <location>
        <begin position="247"/>
        <end position="343"/>
    </location>
</feature>
<feature type="coiled-coil region" evidence="2">
    <location>
        <begin position="86"/>
        <end position="125"/>
    </location>
</feature>
<feature type="compositionally biased region" description="Low complexity" evidence="3">
    <location>
        <begin position="271"/>
        <end position="316"/>
    </location>
</feature>
<feature type="compositionally biased region" description="Acidic residues" evidence="3">
    <location>
        <begin position="317"/>
        <end position="343"/>
    </location>
</feature>
<proteinExistence type="inferred from homology"/>
<gene>
    <name type="primary">med4</name>
    <name type="ORF">DDB_G0292608</name>
</gene>
<protein>
    <recommendedName>
        <fullName>Putative mediator of RNA polymerase II transcription subunit 4</fullName>
    </recommendedName>
    <alternativeName>
        <fullName>Putative mediator complex subunit 4</fullName>
    </alternativeName>
</protein>
<name>MED4_DICDI</name>